<gene>
    <name evidence="1" type="primary">plsY</name>
    <name type="ordered locus">sll1973</name>
</gene>
<feature type="chain" id="PRO_0000188477" description="Glycerol-3-phosphate acyltransferase">
    <location>
        <begin position="1"/>
        <end position="222"/>
    </location>
</feature>
<feature type="transmembrane region" description="Helical" evidence="1">
    <location>
        <begin position="4"/>
        <end position="24"/>
    </location>
</feature>
<feature type="transmembrane region" description="Helical" evidence="1">
    <location>
        <begin position="56"/>
        <end position="76"/>
    </location>
</feature>
<feature type="transmembrane region" description="Helical" evidence="1">
    <location>
        <begin position="87"/>
        <end position="107"/>
    </location>
</feature>
<feature type="transmembrane region" description="Helical" evidence="1">
    <location>
        <begin position="130"/>
        <end position="150"/>
    </location>
</feature>
<feature type="transmembrane region" description="Helical" evidence="1">
    <location>
        <begin position="153"/>
        <end position="173"/>
    </location>
</feature>
<feature type="transmembrane region" description="Helical" evidence="1">
    <location>
        <begin position="174"/>
        <end position="191"/>
    </location>
</feature>
<name>PLSY_SYNY3</name>
<proteinExistence type="inferred from homology"/>
<accession>P73933</accession>
<evidence type="ECO:0000255" key="1">
    <source>
        <dbReference type="HAMAP-Rule" id="MF_01043"/>
    </source>
</evidence>
<dbReference type="EC" id="2.3.1.275" evidence="1"/>
<dbReference type="EMBL" id="BA000022">
    <property type="protein sequence ID" value="BAA17999.1"/>
    <property type="molecule type" value="Genomic_DNA"/>
</dbReference>
<dbReference type="PIR" id="S75137">
    <property type="entry name" value="S75137"/>
</dbReference>
<dbReference type="SMR" id="P73933"/>
<dbReference type="FunCoup" id="P73933">
    <property type="interactions" value="203"/>
</dbReference>
<dbReference type="STRING" id="1148.gene:10498869"/>
<dbReference type="PaxDb" id="1148-1653082"/>
<dbReference type="EnsemblBacteria" id="BAA17999">
    <property type="protein sequence ID" value="BAA17999"/>
    <property type="gene ID" value="BAA17999"/>
</dbReference>
<dbReference type="KEGG" id="syn:sll1973"/>
<dbReference type="eggNOG" id="COG0344">
    <property type="taxonomic scope" value="Bacteria"/>
</dbReference>
<dbReference type="InParanoid" id="P73933"/>
<dbReference type="PhylomeDB" id="P73933"/>
<dbReference type="UniPathway" id="UPA00085"/>
<dbReference type="Proteomes" id="UP000001425">
    <property type="component" value="Chromosome"/>
</dbReference>
<dbReference type="GO" id="GO:0005886">
    <property type="term" value="C:plasma membrane"/>
    <property type="evidence" value="ECO:0000318"/>
    <property type="project" value="GO_Central"/>
</dbReference>
<dbReference type="GO" id="GO:0043772">
    <property type="term" value="F:acyl-phosphate glycerol-3-phosphate acyltransferase activity"/>
    <property type="evidence" value="ECO:0007669"/>
    <property type="project" value="UniProtKB-UniRule"/>
</dbReference>
<dbReference type="GO" id="GO:0008654">
    <property type="term" value="P:phospholipid biosynthetic process"/>
    <property type="evidence" value="ECO:0007669"/>
    <property type="project" value="UniProtKB-UniRule"/>
</dbReference>
<dbReference type="HAMAP" id="MF_01043">
    <property type="entry name" value="PlsY"/>
    <property type="match status" value="1"/>
</dbReference>
<dbReference type="InterPro" id="IPR003811">
    <property type="entry name" value="G3P_acylTferase_PlsY"/>
</dbReference>
<dbReference type="NCBIfam" id="TIGR00023">
    <property type="entry name" value="glycerol-3-phosphate 1-O-acyltransferase PlsY"/>
    <property type="match status" value="1"/>
</dbReference>
<dbReference type="PANTHER" id="PTHR30309:SF0">
    <property type="entry name" value="GLYCEROL-3-PHOSPHATE ACYLTRANSFERASE-RELATED"/>
    <property type="match status" value="1"/>
</dbReference>
<dbReference type="PANTHER" id="PTHR30309">
    <property type="entry name" value="INNER MEMBRANE PROTEIN YGIH"/>
    <property type="match status" value="1"/>
</dbReference>
<dbReference type="Pfam" id="PF02660">
    <property type="entry name" value="G3P_acyltransf"/>
    <property type="match status" value="1"/>
</dbReference>
<dbReference type="SMART" id="SM01207">
    <property type="entry name" value="G3P_acyltransf"/>
    <property type="match status" value="1"/>
</dbReference>
<protein>
    <recommendedName>
        <fullName evidence="1">Glycerol-3-phosphate acyltransferase</fullName>
    </recommendedName>
    <alternativeName>
        <fullName evidence="1">Acyl-PO4 G3P acyltransferase</fullName>
    </alternativeName>
    <alternativeName>
        <fullName evidence="1">Acyl-phosphate--glycerol-3-phosphate acyltransferase</fullName>
    </alternativeName>
    <alternativeName>
        <fullName evidence="1">G3P acyltransferase</fullName>
        <shortName evidence="1">GPAT</shortName>
        <ecNumber evidence="1">2.3.1.275</ecNumber>
    </alternativeName>
    <alternativeName>
        <fullName evidence="1">Lysophosphatidic acid synthase</fullName>
        <shortName evidence="1">LPA synthase</shortName>
    </alternativeName>
</protein>
<sequence>MTTALLLCLCLLLITYLMGSIPTGYLAGKLLLGIDIREHGSKSTGATNVFRTLGKPAAIAVLAIDISKGVMAVALVRAIYSGDWLPALPAAWQNWLTLGVAIAVVLGHSKSIFLKFSGGKSVATSLGVLFMLNIWLALGTLATFLTVIFFTRIVSLSSIVAAIAVNGIALALQLPPPYLAFTFLAGMYVIVRHRTNIERILQGTEPKLGEKVSSVPDRKGVA</sequence>
<reference key="1">
    <citation type="journal article" date="1996" name="DNA Res.">
        <title>Sequence analysis of the genome of the unicellular cyanobacterium Synechocystis sp. strain PCC6803. II. Sequence determination of the entire genome and assignment of potential protein-coding regions.</title>
        <authorList>
            <person name="Kaneko T."/>
            <person name="Sato S."/>
            <person name="Kotani H."/>
            <person name="Tanaka A."/>
            <person name="Asamizu E."/>
            <person name="Nakamura Y."/>
            <person name="Miyajima N."/>
            <person name="Hirosawa M."/>
            <person name="Sugiura M."/>
            <person name="Sasamoto S."/>
            <person name="Kimura T."/>
            <person name="Hosouchi T."/>
            <person name="Matsuno A."/>
            <person name="Muraki A."/>
            <person name="Nakazaki N."/>
            <person name="Naruo K."/>
            <person name="Okumura S."/>
            <person name="Shimpo S."/>
            <person name="Takeuchi C."/>
            <person name="Wada T."/>
            <person name="Watanabe A."/>
            <person name="Yamada M."/>
            <person name="Yasuda M."/>
            <person name="Tabata S."/>
        </authorList>
    </citation>
    <scope>NUCLEOTIDE SEQUENCE [LARGE SCALE GENOMIC DNA]</scope>
    <source>
        <strain>ATCC 27184 / PCC 6803 / Kazusa</strain>
    </source>
</reference>
<comment type="function">
    <text evidence="1">Catalyzes the transfer of an acyl group from acyl-phosphate (acyl-PO(4)) to glycerol-3-phosphate (G3P) to form lysophosphatidic acid (LPA). This enzyme utilizes acyl-phosphate as fatty acyl donor, but not acyl-CoA or acyl-ACP.</text>
</comment>
<comment type="catalytic activity">
    <reaction evidence="1">
        <text>an acyl phosphate + sn-glycerol 3-phosphate = a 1-acyl-sn-glycero-3-phosphate + phosphate</text>
        <dbReference type="Rhea" id="RHEA:34075"/>
        <dbReference type="ChEBI" id="CHEBI:43474"/>
        <dbReference type="ChEBI" id="CHEBI:57597"/>
        <dbReference type="ChEBI" id="CHEBI:57970"/>
        <dbReference type="ChEBI" id="CHEBI:59918"/>
        <dbReference type="EC" id="2.3.1.275"/>
    </reaction>
</comment>
<comment type="pathway">
    <text evidence="1">Lipid metabolism; phospholipid metabolism.</text>
</comment>
<comment type="subunit">
    <text evidence="1">Probably interacts with PlsX.</text>
</comment>
<comment type="subcellular location">
    <subcellularLocation>
        <location evidence="1">Cell inner membrane</location>
        <topology evidence="1">Multi-pass membrane protein</topology>
    </subcellularLocation>
</comment>
<comment type="similarity">
    <text evidence="1">Belongs to the PlsY family.</text>
</comment>
<organism>
    <name type="scientific">Synechocystis sp. (strain ATCC 27184 / PCC 6803 / Kazusa)</name>
    <dbReference type="NCBI Taxonomy" id="1111708"/>
    <lineage>
        <taxon>Bacteria</taxon>
        <taxon>Bacillati</taxon>
        <taxon>Cyanobacteriota</taxon>
        <taxon>Cyanophyceae</taxon>
        <taxon>Synechococcales</taxon>
        <taxon>Merismopediaceae</taxon>
        <taxon>Synechocystis</taxon>
    </lineage>
</organism>
<keyword id="KW-0997">Cell inner membrane</keyword>
<keyword id="KW-1003">Cell membrane</keyword>
<keyword id="KW-0444">Lipid biosynthesis</keyword>
<keyword id="KW-0443">Lipid metabolism</keyword>
<keyword id="KW-0472">Membrane</keyword>
<keyword id="KW-0594">Phospholipid biosynthesis</keyword>
<keyword id="KW-1208">Phospholipid metabolism</keyword>
<keyword id="KW-1185">Reference proteome</keyword>
<keyword id="KW-0808">Transferase</keyword>
<keyword id="KW-0812">Transmembrane</keyword>
<keyword id="KW-1133">Transmembrane helix</keyword>